<gene>
    <name evidence="1" type="primary">rpoA</name>
    <name type="ordered locus">PMT_1755</name>
</gene>
<name>RPOA_PROMM</name>
<dbReference type="EC" id="2.7.7.6" evidence="1"/>
<dbReference type="EMBL" id="BX548175">
    <property type="protein sequence ID" value="CAE21930.1"/>
    <property type="molecule type" value="Genomic_DNA"/>
</dbReference>
<dbReference type="RefSeq" id="WP_011131122.1">
    <property type="nucleotide sequence ID" value="NC_005071.1"/>
</dbReference>
<dbReference type="SMR" id="Q7V523"/>
<dbReference type="KEGG" id="pmt:PMT_1755"/>
<dbReference type="eggNOG" id="COG0202">
    <property type="taxonomic scope" value="Bacteria"/>
</dbReference>
<dbReference type="HOGENOM" id="CLU_053084_0_1_3"/>
<dbReference type="OrthoDB" id="9805706at2"/>
<dbReference type="Proteomes" id="UP000001423">
    <property type="component" value="Chromosome"/>
</dbReference>
<dbReference type="GO" id="GO:0005737">
    <property type="term" value="C:cytoplasm"/>
    <property type="evidence" value="ECO:0007669"/>
    <property type="project" value="UniProtKB-ARBA"/>
</dbReference>
<dbReference type="GO" id="GO:0000428">
    <property type="term" value="C:DNA-directed RNA polymerase complex"/>
    <property type="evidence" value="ECO:0007669"/>
    <property type="project" value="UniProtKB-KW"/>
</dbReference>
<dbReference type="GO" id="GO:0003677">
    <property type="term" value="F:DNA binding"/>
    <property type="evidence" value="ECO:0007669"/>
    <property type="project" value="UniProtKB-UniRule"/>
</dbReference>
<dbReference type="GO" id="GO:0003899">
    <property type="term" value="F:DNA-directed RNA polymerase activity"/>
    <property type="evidence" value="ECO:0007669"/>
    <property type="project" value="UniProtKB-UniRule"/>
</dbReference>
<dbReference type="GO" id="GO:0046983">
    <property type="term" value="F:protein dimerization activity"/>
    <property type="evidence" value="ECO:0007669"/>
    <property type="project" value="InterPro"/>
</dbReference>
<dbReference type="GO" id="GO:0006351">
    <property type="term" value="P:DNA-templated transcription"/>
    <property type="evidence" value="ECO:0007669"/>
    <property type="project" value="UniProtKB-UniRule"/>
</dbReference>
<dbReference type="CDD" id="cd06928">
    <property type="entry name" value="RNAP_alpha_NTD"/>
    <property type="match status" value="1"/>
</dbReference>
<dbReference type="FunFam" id="2.170.120.12:FF:000001">
    <property type="entry name" value="DNA-directed RNA polymerase subunit alpha"/>
    <property type="match status" value="1"/>
</dbReference>
<dbReference type="Gene3D" id="1.10.150.20">
    <property type="entry name" value="5' to 3' exonuclease, C-terminal subdomain"/>
    <property type="match status" value="1"/>
</dbReference>
<dbReference type="Gene3D" id="2.170.120.12">
    <property type="entry name" value="DNA-directed RNA polymerase, insert domain"/>
    <property type="match status" value="1"/>
</dbReference>
<dbReference type="Gene3D" id="3.30.1360.10">
    <property type="entry name" value="RNA polymerase, RBP11-like subunit"/>
    <property type="match status" value="1"/>
</dbReference>
<dbReference type="HAMAP" id="MF_00059">
    <property type="entry name" value="RNApol_bact_RpoA"/>
    <property type="match status" value="1"/>
</dbReference>
<dbReference type="InterPro" id="IPR011262">
    <property type="entry name" value="DNA-dir_RNA_pol_insert"/>
</dbReference>
<dbReference type="InterPro" id="IPR011263">
    <property type="entry name" value="DNA-dir_RNA_pol_RpoA/D/Rpb3"/>
</dbReference>
<dbReference type="InterPro" id="IPR011773">
    <property type="entry name" value="DNA-dir_RpoA"/>
</dbReference>
<dbReference type="InterPro" id="IPR036603">
    <property type="entry name" value="RBP11-like"/>
</dbReference>
<dbReference type="InterPro" id="IPR011260">
    <property type="entry name" value="RNAP_asu_C"/>
</dbReference>
<dbReference type="InterPro" id="IPR036643">
    <property type="entry name" value="RNApol_insert_sf"/>
</dbReference>
<dbReference type="NCBIfam" id="NF003516">
    <property type="entry name" value="PRK05182.2-2"/>
    <property type="match status" value="1"/>
</dbReference>
<dbReference type="NCBIfam" id="NF003519">
    <property type="entry name" value="PRK05182.2-5"/>
    <property type="match status" value="1"/>
</dbReference>
<dbReference type="NCBIfam" id="TIGR02027">
    <property type="entry name" value="rpoA"/>
    <property type="match status" value="1"/>
</dbReference>
<dbReference type="Pfam" id="PF01000">
    <property type="entry name" value="RNA_pol_A_bac"/>
    <property type="match status" value="1"/>
</dbReference>
<dbReference type="Pfam" id="PF03118">
    <property type="entry name" value="RNA_pol_A_CTD"/>
    <property type="match status" value="1"/>
</dbReference>
<dbReference type="Pfam" id="PF01193">
    <property type="entry name" value="RNA_pol_L"/>
    <property type="match status" value="1"/>
</dbReference>
<dbReference type="SMART" id="SM00662">
    <property type="entry name" value="RPOLD"/>
    <property type="match status" value="1"/>
</dbReference>
<dbReference type="SUPFAM" id="SSF47789">
    <property type="entry name" value="C-terminal domain of RNA polymerase alpha subunit"/>
    <property type="match status" value="1"/>
</dbReference>
<dbReference type="SUPFAM" id="SSF56553">
    <property type="entry name" value="Insert subdomain of RNA polymerase alpha subunit"/>
    <property type="match status" value="1"/>
</dbReference>
<dbReference type="SUPFAM" id="SSF55257">
    <property type="entry name" value="RBP11-like subunits of RNA polymerase"/>
    <property type="match status" value="1"/>
</dbReference>
<keyword id="KW-0240">DNA-directed RNA polymerase</keyword>
<keyword id="KW-0548">Nucleotidyltransferase</keyword>
<keyword id="KW-1185">Reference proteome</keyword>
<keyword id="KW-0804">Transcription</keyword>
<keyword id="KW-0808">Transferase</keyword>
<sequence>MLQYQIDRIEHQVADDRAQTGVFLIGPLERGQATTLGNSLRRVLMGGLEGSAITAVRIAGVNHEYATIPGVREDVLDILLNCKQLSVNSRTSELEIGRLVVTGPAQVKAKDLQFSSQVQVVDGDRQIATVHEGHSLELEVHVERGIGYRPVDRHNEDVSAIDLLQIDAVFMPVRRVNFTIDETAVAEGGSTRERLRIEIVTDGSTTPDDALAESANQLIELFQPLATVTMVEEPGLEPEPSAESQIPLEELNLSVRAYNCLKRAQVNSVSDLMGFSYEDLLEIKNFGSKSADEVIEALERIGISIPQSRTSA</sequence>
<evidence type="ECO:0000255" key="1">
    <source>
        <dbReference type="HAMAP-Rule" id="MF_00059"/>
    </source>
</evidence>
<accession>Q7V523</accession>
<proteinExistence type="inferred from homology"/>
<comment type="function">
    <text evidence="1">DNA-dependent RNA polymerase catalyzes the transcription of DNA into RNA using the four ribonucleoside triphosphates as substrates.</text>
</comment>
<comment type="catalytic activity">
    <reaction evidence="1">
        <text>RNA(n) + a ribonucleoside 5'-triphosphate = RNA(n+1) + diphosphate</text>
        <dbReference type="Rhea" id="RHEA:21248"/>
        <dbReference type="Rhea" id="RHEA-COMP:14527"/>
        <dbReference type="Rhea" id="RHEA-COMP:17342"/>
        <dbReference type="ChEBI" id="CHEBI:33019"/>
        <dbReference type="ChEBI" id="CHEBI:61557"/>
        <dbReference type="ChEBI" id="CHEBI:140395"/>
        <dbReference type="EC" id="2.7.7.6"/>
    </reaction>
</comment>
<comment type="subunit">
    <text evidence="1">In cyanobacteria the RNAP catalytic core is composed of 2 alpha, 1 beta, 1 beta', 1 gamma and 1 omega subunit. When a sigma factor is associated with the core the holoenzyme is formed, which can initiate transcription.</text>
</comment>
<comment type="domain">
    <text evidence="1">The N-terminal domain is essential for RNAP assembly and basal transcription, whereas the C-terminal domain is involved in interaction with transcriptional regulators and with upstream promoter elements.</text>
</comment>
<comment type="similarity">
    <text evidence="1">Belongs to the RNA polymerase alpha chain family.</text>
</comment>
<protein>
    <recommendedName>
        <fullName evidence="1">DNA-directed RNA polymerase subunit alpha</fullName>
        <shortName evidence="1">RNAP subunit alpha</shortName>
        <ecNumber evidence="1">2.7.7.6</ecNumber>
    </recommendedName>
    <alternativeName>
        <fullName evidence="1">RNA polymerase subunit alpha</fullName>
    </alternativeName>
    <alternativeName>
        <fullName evidence="1">Transcriptase subunit alpha</fullName>
    </alternativeName>
</protein>
<reference key="1">
    <citation type="journal article" date="2003" name="Nature">
        <title>Genome divergence in two Prochlorococcus ecotypes reflects oceanic niche differentiation.</title>
        <authorList>
            <person name="Rocap G."/>
            <person name="Larimer F.W."/>
            <person name="Lamerdin J.E."/>
            <person name="Malfatti S."/>
            <person name="Chain P."/>
            <person name="Ahlgren N.A."/>
            <person name="Arellano A."/>
            <person name="Coleman M."/>
            <person name="Hauser L."/>
            <person name="Hess W.R."/>
            <person name="Johnson Z.I."/>
            <person name="Land M.L."/>
            <person name="Lindell D."/>
            <person name="Post A.F."/>
            <person name="Regala W."/>
            <person name="Shah M."/>
            <person name="Shaw S.L."/>
            <person name="Steglich C."/>
            <person name="Sullivan M.B."/>
            <person name="Ting C.S."/>
            <person name="Tolonen A."/>
            <person name="Webb E.A."/>
            <person name="Zinser E.R."/>
            <person name="Chisholm S.W."/>
        </authorList>
    </citation>
    <scope>NUCLEOTIDE SEQUENCE [LARGE SCALE GENOMIC DNA]</scope>
    <source>
        <strain>MIT 9313</strain>
    </source>
</reference>
<feature type="chain" id="PRO_0000175357" description="DNA-directed RNA polymerase subunit alpha">
    <location>
        <begin position="1"/>
        <end position="312"/>
    </location>
</feature>
<feature type="region of interest" description="Alpha N-terminal domain (alpha-NTD)" evidence="1">
    <location>
        <begin position="1"/>
        <end position="229"/>
    </location>
</feature>
<feature type="region of interest" description="Alpha C-terminal domain (alpha-CTD)" evidence="1">
    <location>
        <begin position="245"/>
        <end position="312"/>
    </location>
</feature>
<organism>
    <name type="scientific">Prochlorococcus marinus (strain MIT 9313)</name>
    <dbReference type="NCBI Taxonomy" id="74547"/>
    <lineage>
        <taxon>Bacteria</taxon>
        <taxon>Bacillati</taxon>
        <taxon>Cyanobacteriota</taxon>
        <taxon>Cyanophyceae</taxon>
        <taxon>Synechococcales</taxon>
        <taxon>Prochlorococcaceae</taxon>
        <taxon>Prochlorococcus</taxon>
    </lineage>
</organism>